<reference key="1">
    <citation type="journal article" date="2013" name="Proc. Natl. Acad. Sci. U.S.A.">
        <title>Polynucleobacter necessarius, a model for genome reduction in both free-living and symbiotic bacteria.</title>
        <authorList>
            <person name="Boscaro V."/>
            <person name="Felletti M."/>
            <person name="Vannini C."/>
            <person name="Ackerman M.S."/>
            <person name="Chain P.S."/>
            <person name="Malfatti S."/>
            <person name="Vergez L.M."/>
            <person name="Shin M."/>
            <person name="Doak T.G."/>
            <person name="Lynch M."/>
            <person name="Petroni G."/>
        </authorList>
    </citation>
    <scope>NUCLEOTIDE SEQUENCE [LARGE SCALE GENOMIC DNA]</scope>
    <source>
        <strain>STIR1</strain>
    </source>
</reference>
<organism>
    <name type="scientific">Polynucleobacter necessarius subsp. necessarius (strain STIR1)</name>
    <dbReference type="NCBI Taxonomy" id="452638"/>
    <lineage>
        <taxon>Bacteria</taxon>
        <taxon>Pseudomonadati</taxon>
        <taxon>Pseudomonadota</taxon>
        <taxon>Betaproteobacteria</taxon>
        <taxon>Burkholderiales</taxon>
        <taxon>Burkholderiaceae</taxon>
        <taxon>Polynucleobacter</taxon>
    </lineage>
</organism>
<gene>
    <name evidence="1" type="primary">rplM</name>
    <name type="ordered locus">Pnec_1590</name>
</gene>
<comment type="function">
    <text evidence="1">This protein is one of the early assembly proteins of the 50S ribosomal subunit, although it is not seen to bind rRNA by itself. It is important during the early stages of 50S assembly.</text>
</comment>
<comment type="subunit">
    <text evidence="1">Part of the 50S ribosomal subunit.</text>
</comment>
<comment type="similarity">
    <text evidence="1">Belongs to the universal ribosomal protein uL13 family.</text>
</comment>
<keyword id="KW-0687">Ribonucleoprotein</keyword>
<keyword id="KW-0689">Ribosomal protein</keyword>
<proteinExistence type="inferred from homology"/>
<name>RL13_POLNS</name>
<sequence length="142" mass="15787">MKTFSAKSHEVVHEWFVIDATDKVLGRVASEVALRLRGKHKPEYTPHVDTGDFIVVINSSKLRVTGTKGLNKIYYRHSGYPGGISSTNFDKMQDRFPGRALEKAVKGMLPKGPLGYAMIKKLKVYGDANHPHAAQQPKALEI</sequence>
<dbReference type="EMBL" id="CP001010">
    <property type="protein sequence ID" value="ACB44667.1"/>
    <property type="molecule type" value="Genomic_DNA"/>
</dbReference>
<dbReference type="SMR" id="B1XS32"/>
<dbReference type="STRING" id="452638.Pnec_1590"/>
<dbReference type="KEGG" id="pne:Pnec_1590"/>
<dbReference type="eggNOG" id="COG0102">
    <property type="taxonomic scope" value="Bacteria"/>
</dbReference>
<dbReference type="HOGENOM" id="CLU_082184_2_2_4"/>
<dbReference type="OrthoDB" id="9801330at2"/>
<dbReference type="GO" id="GO:0022625">
    <property type="term" value="C:cytosolic large ribosomal subunit"/>
    <property type="evidence" value="ECO:0007669"/>
    <property type="project" value="TreeGrafter"/>
</dbReference>
<dbReference type="GO" id="GO:0003729">
    <property type="term" value="F:mRNA binding"/>
    <property type="evidence" value="ECO:0007669"/>
    <property type="project" value="TreeGrafter"/>
</dbReference>
<dbReference type="GO" id="GO:0003735">
    <property type="term" value="F:structural constituent of ribosome"/>
    <property type="evidence" value="ECO:0007669"/>
    <property type="project" value="InterPro"/>
</dbReference>
<dbReference type="GO" id="GO:0017148">
    <property type="term" value="P:negative regulation of translation"/>
    <property type="evidence" value="ECO:0007669"/>
    <property type="project" value="TreeGrafter"/>
</dbReference>
<dbReference type="GO" id="GO:0006412">
    <property type="term" value="P:translation"/>
    <property type="evidence" value="ECO:0007669"/>
    <property type="project" value="UniProtKB-UniRule"/>
</dbReference>
<dbReference type="CDD" id="cd00392">
    <property type="entry name" value="Ribosomal_L13"/>
    <property type="match status" value="1"/>
</dbReference>
<dbReference type="FunFam" id="3.90.1180.10:FF:000001">
    <property type="entry name" value="50S ribosomal protein L13"/>
    <property type="match status" value="1"/>
</dbReference>
<dbReference type="Gene3D" id="3.90.1180.10">
    <property type="entry name" value="Ribosomal protein L13"/>
    <property type="match status" value="1"/>
</dbReference>
<dbReference type="HAMAP" id="MF_01366">
    <property type="entry name" value="Ribosomal_uL13"/>
    <property type="match status" value="1"/>
</dbReference>
<dbReference type="InterPro" id="IPR005822">
    <property type="entry name" value="Ribosomal_uL13"/>
</dbReference>
<dbReference type="InterPro" id="IPR005823">
    <property type="entry name" value="Ribosomal_uL13_bac-type"/>
</dbReference>
<dbReference type="InterPro" id="IPR036899">
    <property type="entry name" value="Ribosomal_uL13_sf"/>
</dbReference>
<dbReference type="NCBIfam" id="TIGR01066">
    <property type="entry name" value="rplM_bact"/>
    <property type="match status" value="1"/>
</dbReference>
<dbReference type="PANTHER" id="PTHR11545:SF2">
    <property type="entry name" value="LARGE RIBOSOMAL SUBUNIT PROTEIN UL13M"/>
    <property type="match status" value="1"/>
</dbReference>
<dbReference type="PANTHER" id="PTHR11545">
    <property type="entry name" value="RIBOSOMAL PROTEIN L13"/>
    <property type="match status" value="1"/>
</dbReference>
<dbReference type="Pfam" id="PF00572">
    <property type="entry name" value="Ribosomal_L13"/>
    <property type="match status" value="1"/>
</dbReference>
<dbReference type="PIRSF" id="PIRSF002181">
    <property type="entry name" value="Ribosomal_L13"/>
    <property type="match status" value="1"/>
</dbReference>
<dbReference type="SUPFAM" id="SSF52161">
    <property type="entry name" value="Ribosomal protein L13"/>
    <property type="match status" value="1"/>
</dbReference>
<accession>B1XS32</accession>
<feature type="chain" id="PRO_1000144163" description="Large ribosomal subunit protein uL13">
    <location>
        <begin position="1"/>
        <end position="142"/>
    </location>
</feature>
<evidence type="ECO:0000255" key="1">
    <source>
        <dbReference type="HAMAP-Rule" id="MF_01366"/>
    </source>
</evidence>
<evidence type="ECO:0000305" key="2"/>
<protein>
    <recommendedName>
        <fullName evidence="1">Large ribosomal subunit protein uL13</fullName>
    </recommendedName>
    <alternativeName>
        <fullName evidence="2">50S ribosomal protein L13</fullName>
    </alternativeName>
</protein>